<accession>Q9PKK7</accession>
<proteinExistence type="inferred from homology"/>
<dbReference type="EC" id="3.1.1.31"/>
<dbReference type="EMBL" id="AE002160">
    <property type="protein sequence ID" value="AAF73557.1"/>
    <property type="molecule type" value="Genomic_DNA"/>
</dbReference>
<dbReference type="RefSeq" id="WP_010230500.1">
    <property type="nucleotide sequence ID" value="NZ_CP063055.1"/>
</dbReference>
<dbReference type="SMR" id="Q9PKK7"/>
<dbReference type="GeneID" id="1245813"/>
<dbReference type="KEGG" id="cmu:TC_0458"/>
<dbReference type="eggNOG" id="COG0363">
    <property type="taxonomic scope" value="Bacteria"/>
</dbReference>
<dbReference type="HOGENOM" id="CLU_053947_2_0_0"/>
<dbReference type="OrthoDB" id="9810967at2"/>
<dbReference type="UniPathway" id="UPA00115">
    <property type="reaction ID" value="UER00409"/>
</dbReference>
<dbReference type="Proteomes" id="UP000000800">
    <property type="component" value="Chromosome"/>
</dbReference>
<dbReference type="GO" id="GO:0017057">
    <property type="term" value="F:6-phosphogluconolactonase activity"/>
    <property type="evidence" value="ECO:0007669"/>
    <property type="project" value="UniProtKB-EC"/>
</dbReference>
<dbReference type="GO" id="GO:0005975">
    <property type="term" value="P:carbohydrate metabolic process"/>
    <property type="evidence" value="ECO:0007669"/>
    <property type="project" value="InterPro"/>
</dbReference>
<dbReference type="GO" id="GO:0006098">
    <property type="term" value="P:pentose-phosphate shunt"/>
    <property type="evidence" value="ECO:0007669"/>
    <property type="project" value="UniProtKB-UniPathway"/>
</dbReference>
<dbReference type="CDD" id="cd01400">
    <property type="entry name" value="6PGL"/>
    <property type="match status" value="1"/>
</dbReference>
<dbReference type="Gene3D" id="3.40.50.1360">
    <property type="match status" value="1"/>
</dbReference>
<dbReference type="InterPro" id="IPR005900">
    <property type="entry name" value="6-phosphogluconolactonase_DevB"/>
</dbReference>
<dbReference type="InterPro" id="IPR006148">
    <property type="entry name" value="Glc/Gal-6P_isomerase"/>
</dbReference>
<dbReference type="InterPro" id="IPR037171">
    <property type="entry name" value="NagB/RpiA_transferase-like"/>
</dbReference>
<dbReference type="InterPro" id="IPR039104">
    <property type="entry name" value="PGLS"/>
</dbReference>
<dbReference type="NCBIfam" id="TIGR01198">
    <property type="entry name" value="pgl"/>
    <property type="match status" value="1"/>
</dbReference>
<dbReference type="PANTHER" id="PTHR11054">
    <property type="entry name" value="6-PHOSPHOGLUCONOLACTONASE"/>
    <property type="match status" value="1"/>
</dbReference>
<dbReference type="PANTHER" id="PTHR11054:SF0">
    <property type="entry name" value="6-PHOSPHOGLUCONOLACTONASE"/>
    <property type="match status" value="1"/>
</dbReference>
<dbReference type="Pfam" id="PF01182">
    <property type="entry name" value="Glucosamine_iso"/>
    <property type="match status" value="1"/>
</dbReference>
<dbReference type="SUPFAM" id="SSF100950">
    <property type="entry name" value="NagB/RpiA/CoA transferase-like"/>
    <property type="match status" value="1"/>
</dbReference>
<sequence>MATLISLNDANRMLIAESQEDFLQIACYDWISTANKAIQKRGAFYVALSGGKTPLQIFQEIVKKRAAISDCSKIFVFWGDERASEDTEAGSNYLKAMDILKWLRIPDTQIFRMDTANPKGDEIYENLIREHVPDTIFDMVMLGVGEDGHTLSLFPGTAALEEKDRLVVFNEVPQLQTRRMTLTFPIVRQARHLVAYIQGTAKQDLCHKLLHPLGRDTFPIERVGTPLNPLQWVLSSDCCRAADLADIPAECKLEMF</sequence>
<feature type="chain" id="PRO_0000090091" description="6-phosphogluconolactonase">
    <location>
        <begin position="1"/>
        <end position="256"/>
    </location>
</feature>
<keyword id="KW-0378">Hydrolase</keyword>
<name>6PGL_CHLMU</name>
<reference key="1">
    <citation type="journal article" date="2000" name="Nucleic Acids Res.">
        <title>Genome sequences of Chlamydia trachomatis MoPn and Chlamydia pneumoniae AR39.</title>
        <authorList>
            <person name="Read T.D."/>
            <person name="Brunham R.C."/>
            <person name="Shen C."/>
            <person name="Gill S.R."/>
            <person name="Heidelberg J.F."/>
            <person name="White O."/>
            <person name="Hickey E.K."/>
            <person name="Peterson J.D."/>
            <person name="Utterback T.R."/>
            <person name="Berry K.J."/>
            <person name="Bass S."/>
            <person name="Linher K.D."/>
            <person name="Weidman J.F."/>
            <person name="Khouri H.M."/>
            <person name="Craven B."/>
            <person name="Bowman C."/>
            <person name="Dodson R.J."/>
            <person name="Gwinn M.L."/>
            <person name="Nelson W.C."/>
            <person name="DeBoy R.T."/>
            <person name="Kolonay J.F."/>
            <person name="McClarty G."/>
            <person name="Salzberg S.L."/>
            <person name="Eisen J.A."/>
            <person name="Fraser C.M."/>
        </authorList>
    </citation>
    <scope>NUCLEOTIDE SEQUENCE [LARGE SCALE GENOMIC DNA]</scope>
    <source>
        <strain>MoPn / Nigg</strain>
    </source>
</reference>
<protein>
    <recommendedName>
        <fullName>6-phosphogluconolactonase</fullName>
        <shortName>6PGL</shortName>
        <ecNumber>3.1.1.31</ecNumber>
    </recommendedName>
</protein>
<evidence type="ECO:0000305" key="1"/>
<comment type="function">
    <text>Hydrolysis of 6-phosphogluconolactone to 6-phosphogluconate.</text>
</comment>
<comment type="catalytic activity">
    <reaction>
        <text>6-phospho-D-glucono-1,5-lactone + H2O = 6-phospho-D-gluconate + H(+)</text>
        <dbReference type="Rhea" id="RHEA:12556"/>
        <dbReference type="ChEBI" id="CHEBI:15377"/>
        <dbReference type="ChEBI" id="CHEBI:15378"/>
        <dbReference type="ChEBI" id="CHEBI:57955"/>
        <dbReference type="ChEBI" id="CHEBI:58759"/>
        <dbReference type="EC" id="3.1.1.31"/>
    </reaction>
</comment>
<comment type="pathway">
    <text>Carbohydrate degradation; pentose phosphate pathway; D-ribulose 5-phosphate from D-glucose 6-phosphate (oxidative stage): step 2/3.</text>
</comment>
<comment type="similarity">
    <text evidence="1">Belongs to the glucosamine/galactosamine-6-phosphate isomerase family. 6-phosphogluconolactonase subfamily.</text>
</comment>
<gene>
    <name type="primary">pgl</name>
    <name type="ordered locus">TC_0458</name>
</gene>
<organism>
    <name type="scientific">Chlamydia muridarum (strain MoPn / Nigg)</name>
    <dbReference type="NCBI Taxonomy" id="243161"/>
    <lineage>
        <taxon>Bacteria</taxon>
        <taxon>Pseudomonadati</taxon>
        <taxon>Chlamydiota</taxon>
        <taxon>Chlamydiia</taxon>
        <taxon>Chlamydiales</taxon>
        <taxon>Chlamydiaceae</taxon>
        <taxon>Chlamydia/Chlamydophila group</taxon>
        <taxon>Chlamydia</taxon>
    </lineage>
</organism>